<dbReference type="EC" id="3.1.15.-" evidence="1"/>
<dbReference type="EMBL" id="AE014299">
    <property type="protein sequence ID" value="AAN53670.1"/>
    <property type="molecule type" value="Genomic_DNA"/>
</dbReference>
<dbReference type="RefSeq" id="NP_716225.1">
    <property type="nucleotide sequence ID" value="NC_004347.2"/>
</dbReference>
<dbReference type="RefSeq" id="WP_011070927.1">
    <property type="nucleotide sequence ID" value="NC_004347.2"/>
</dbReference>
<dbReference type="SMR" id="Q8EJ78"/>
<dbReference type="STRING" id="211586.SO_0592"/>
<dbReference type="PaxDb" id="211586-SO_0592"/>
<dbReference type="KEGG" id="son:SO_0592"/>
<dbReference type="PATRIC" id="fig|211586.12.peg.574"/>
<dbReference type="eggNOG" id="COG1949">
    <property type="taxonomic scope" value="Bacteria"/>
</dbReference>
<dbReference type="HOGENOM" id="CLU_064761_2_0_6"/>
<dbReference type="OrthoDB" id="9801329at2"/>
<dbReference type="PhylomeDB" id="Q8EJ78"/>
<dbReference type="BioCyc" id="SONE211586:G1GMP-561-MONOMER"/>
<dbReference type="Proteomes" id="UP000008186">
    <property type="component" value="Chromosome"/>
</dbReference>
<dbReference type="GO" id="GO:0005737">
    <property type="term" value="C:cytoplasm"/>
    <property type="evidence" value="ECO:0007669"/>
    <property type="project" value="UniProtKB-SubCell"/>
</dbReference>
<dbReference type="GO" id="GO:0000175">
    <property type="term" value="F:3'-5'-RNA exonuclease activity"/>
    <property type="evidence" value="ECO:0007669"/>
    <property type="project" value="InterPro"/>
</dbReference>
<dbReference type="GO" id="GO:0003676">
    <property type="term" value="F:nucleic acid binding"/>
    <property type="evidence" value="ECO:0007669"/>
    <property type="project" value="InterPro"/>
</dbReference>
<dbReference type="GO" id="GO:0006259">
    <property type="term" value="P:DNA metabolic process"/>
    <property type="evidence" value="ECO:0007669"/>
    <property type="project" value="UniProtKB-ARBA"/>
</dbReference>
<dbReference type="CDD" id="cd06135">
    <property type="entry name" value="Orn"/>
    <property type="match status" value="1"/>
</dbReference>
<dbReference type="FunFam" id="3.30.420.10:FF:000003">
    <property type="entry name" value="Oligoribonuclease"/>
    <property type="match status" value="1"/>
</dbReference>
<dbReference type="Gene3D" id="3.30.420.10">
    <property type="entry name" value="Ribonuclease H-like superfamily/Ribonuclease H"/>
    <property type="match status" value="1"/>
</dbReference>
<dbReference type="HAMAP" id="MF_00045">
    <property type="entry name" value="Oligoribonuclease"/>
    <property type="match status" value="1"/>
</dbReference>
<dbReference type="InterPro" id="IPR013520">
    <property type="entry name" value="Exonuclease_RNaseT/DNA_pol3"/>
</dbReference>
<dbReference type="InterPro" id="IPR022894">
    <property type="entry name" value="Oligoribonuclease"/>
</dbReference>
<dbReference type="InterPro" id="IPR012337">
    <property type="entry name" value="RNaseH-like_sf"/>
</dbReference>
<dbReference type="InterPro" id="IPR036397">
    <property type="entry name" value="RNaseH_sf"/>
</dbReference>
<dbReference type="NCBIfam" id="NF003765">
    <property type="entry name" value="PRK05359.1"/>
    <property type="match status" value="1"/>
</dbReference>
<dbReference type="PANTHER" id="PTHR11046">
    <property type="entry name" value="OLIGORIBONUCLEASE, MITOCHONDRIAL"/>
    <property type="match status" value="1"/>
</dbReference>
<dbReference type="PANTHER" id="PTHR11046:SF0">
    <property type="entry name" value="OLIGORIBONUCLEASE, MITOCHONDRIAL"/>
    <property type="match status" value="1"/>
</dbReference>
<dbReference type="Pfam" id="PF00929">
    <property type="entry name" value="RNase_T"/>
    <property type="match status" value="1"/>
</dbReference>
<dbReference type="SMART" id="SM00479">
    <property type="entry name" value="EXOIII"/>
    <property type="match status" value="1"/>
</dbReference>
<dbReference type="SUPFAM" id="SSF53098">
    <property type="entry name" value="Ribonuclease H-like"/>
    <property type="match status" value="1"/>
</dbReference>
<protein>
    <recommendedName>
        <fullName evidence="1">Oligoribonuclease</fullName>
        <ecNumber evidence="1">3.1.15.-</ecNumber>
    </recommendedName>
</protein>
<gene>
    <name evidence="1" type="primary">orn</name>
    <name type="ordered locus">SO_0592</name>
</gene>
<evidence type="ECO:0000255" key="1">
    <source>
        <dbReference type="HAMAP-Rule" id="MF_00045"/>
    </source>
</evidence>
<accession>Q8EJ78</accession>
<organism>
    <name type="scientific">Shewanella oneidensis (strain ATCC 700550 / JCM 31522 / CIP 106686 / LMG 19005 / NCIMB 14063 / MR-1)</name>
    <dbReference type="NCBI Taxonomy" id="211586"/>
    <lineage>
        <taxon>Bacteria</taxon>
        <taxon>Pseudomonadati</taxon>
        <taxon>Pseudomonadota</taxon>
        <taxon>Gammaproteobacteria</taxon>
        <taxon>Alteromonadales</taxon>
        <taxon>Shewanellaceae</taxon>
        <taxon>Shewanella</taxon>
    </lineage>
</organism>
<keyword id="KW-0963">Cytoplasm</keyword>
<keyword id="KW-0269">Exonuclease</keyword>
<keyword id="KW-0378">Hydrolase</keyword>
<keyword id="KW-0540">Nuclease</keyword>
<keyword id="KW-1185">Reference proteome</keyword>
<comment type="function">
    <text evidence="1">3'-to-5' exoribonuclease specific for small oligoribonucleotides.</text>
</comment>
<comment type="subcellular location">
    <subcellularLocation>
        <location evidence="1">Cytoplasm</location>
    </subcellularLocation>
</comment>
<comment type="similarity">
    <text evidence="1">Belongs to the oligoribonuclease family.</text>
</comment>
<proteinExistence type="inferred from homology"/>
<sequence>MAADANNLIWIDLEMTGLEPDVDRVIEIATLVTDQELNIIGQGPVIAIHQSDEVLAAMDDWNQKHHGESGLIERVRASQVNEAEAVAQTIAFLAQYVPKGVSPMCGNSVGQDRRFLNRYMRELEDYFHYRNLDVSTVKELVKRWSPETMAGFKKQNTHQALQDIQESIAELQYYRSKVFKI</sequence>
<name>ORN_SHEON</name>
<feature type="chain" id="PRO_0000111070" description="Oligoribonuclease">
    <location>
        <begin position="1"/>
        <end position="181"/>
    </location>
</feature>
<feature type="domain" description="Exonuclease" evidence="1">
    <location>
        <begin position="8"/>
        <end position="171"/>
    </location>
</feature>
<feature type="active site" evidence="1">
    <location>
        <position position="129"/>
    </location>
</feature>
<reference key="1">
    <citation type="journal article" date="2002" name="Nat. Biotechnol.">
        <title>Genome sequence of the dissimilatory metal ion-reducing bacterium Shewanella oneidensis.</title>
        <authorList>
            <person name="Heidelberg J.F."/>
            <person name="Paulsen I.T."/>
            <person name="Nelson K.E."/>
            <person name="Gaidos E.J."/>
            <person name="Nelson W.C."/>
            <person name="Read T.D."/>
            <person name="Eisen J.A."/>
            <person name="Seshadri R."/>
            <person name="Ward N.L."/>
            <person name="Methe B.A."/>
            <person name="Clayton R.A."/>
            <person name="Meyer T."/>
            <person name="Tsapin A."/>
            <person name="Scott J."/>
            <person name="Beanan M.J."/>
            <person name="Brinkac L.M."/>
            <person name="Daugherty S.C."/>
            <person name="DeBoy R.T."/>
            <person name="Dodson R.J."/>
            <person name="Durkin A.S."/>
            <person name="Haft D.H."/>
            <person name="Kolonay J.F."/>
            <person name="Madupu R."/>
            <person name="Peterson J.D."/>
            <person name="Umayam L.A."/>
            <person name="White O."/>
            <person name="Wolf A.M."/>
            <person name="Vamathevan J.J."/>
            <person name="Weidman J.F."/>
            <person name="Impraim M."/>
            <person name="Lee K."/>
            <person name="Berry K.J."/>
            <person name="Lee C."/>
            <person name="Mueller J."/>
            <person name="Khouri H.M."/>
            <person name="Gill J."/>
            <person name="Utterback T.R."/>
            <person name="McDonald L.A."/>
            <person name="Feldblyum T.V."/>
            <person name="Smith H.O."/>
            <person name="Venter J.C."/>
            <person name="Nealson K.H."/>
            <person name="Fraser C.M."/>
        </authorList>
    </citation>
    <scope>NUCLEOTIDE SEQUENCE [LARGE SCALE GENOMIC DNA]</scope>
    <source>
        <strain>ATCC 700550 / JCM 31522 / CIP 106686 / LMG 19005 / NCIMB 14063 / MR-1</strain>
    </source>
</reference>